<dbReference type="EMBL" id="AM884176">
    <property type="protein sequence ID" value="CAP04318.1"/>
    <property type="molecule type" value="Genomic_DNA"/>
</dbReference>
<dbReference type="RefSeq" id="WP_009873947.1">
    <property type="nucleotide sequence ID" value="NC_010287.1"/>
</dbReference>
<dbReference type="RefSeq" id="YP_001654950.1">
    <property type="nucleotide sequence ID" value="NC_010287.1"/>
</dbReference>
<dbReference type="SMR" id="B0B8J2"/>
<dbReference type="KEGG" id="ctb:CTL0881"/>
<dbReference type="PATRIC" id="fig|471472.4.peg.944"/>
<dbReference type="HOGENOM" id="CLU_160655_2_0_0"/>
<dbReference type="Proteomes" id="UP001154402">
    <property type="component" value="Chromosome"/>
</dbReference>
<dbReference type="GO" id="GO:0005829">
    <property type="term" value="C:cytosol"/>
    <property type="evidence" value="ECO:0007669"/>
    <property type="project" value="TreeGrafter"/>
</dbReference>
<dbReference type="GO" id="GO:0015935">
    <property type="term" value="C:small ribosomal subunit"/>
    <property type="evidence" value="ECO:0007669"/>
    <property type="project" value="TreeGrafter"/>
</dbReference>
<dbReference type="GO" id="GO:0070181">
    <property type="term" value="F:small ribosomal subunit rRNA binding"/>
    <property type="evidence" value="ECO:0007669"/>
    <property type="project" value="TreeGrafter"/>
</dbReference>
<dbReference type="GO" id="GO:0003735">
    <property type="term" value="F:structural constituent of ribosome"/>
    <property type="evidence" value="ECO:0007669"/>
    <property type="project" value="InterPro"/>
</dbReference>
<dbReference type="GO" id="GO:0006412">
    <property type="term" value="P:translation"/>
    <property type="evidence" value="ECO:0007669"/>
    <property type="project" value="UniProtKB-UniRule"/>
</dbReference>
<dbReference type="FunFam" id="1.20.58.110:FF:000006">
    <property type="entry name" value="30S ribosomal protein S20"/>
    <property type="match status" value="1"/>
</dbReference>
<dbReference type="Gene3D" id="1.20.58.110">
    <property type="entry name" value="Ribosomal protein S20"/>
    <property type="match status" value="1"/>
</dbReference>
<dbReference type="HAMAP" id="MF_00500">
    <property type="entry name" value="Ribosomal_bS20"/>
    <property type="match status" value="1"/>
</dbReference>
<dbReference type="InterPro" id="IPR002583">
    <property type="entry name" value="Ribosomal_bS20"/>
</dbReference>
<dbReference type="InterPro" id="IPR036510">
    <property type="entry name" value="Ribosomal_bS20_sf"/>
</dbReference>
<dbReference type="NCBIfam" id="TIGR00029">
    <property type="entry name" value="S20"/>
    <property type="match status" value="1"/>
</dbReference>
<dbReference type="PANTHER" id="PTHR33398">
    <property type="entry name" value="30S RIBOSOMAL PROTEIN S20"/>
    <property type="match status" value="1"/>
</dbReference>
<dbReference type="PANTHER" id="PTHR33398:SF1">
    <property type="entry name" value="SMALL RIBOSOMAL SUBUNIT PROTEIN BS20C"/>
    <property type="match status" value="1"/>
</dbReference>
<dbReference type="Pfam" id="PF01649">
    <property type="entry name" value="Ribosomal_S20p"/>
    <property type="match status" value="1"/>
</dbReference>
<dbReference type="SUPFAM" id="SSF46992">
    <property type="entry name" value="Ribosomal protein S20"/>
    <property type="match status" value="1"/>
</dbReference>
<protein>
    <recommendedName>
        <fullName evidence="1">Small ribosomal subunit protein bS20</fullName>
    </recommendedName>
    <alternativeName>
        <fullName evidence="3">30S ribosomal protein S20</fullName>
    </alternativeName>
</protein>
<reference key="1">
    <citation type="journal article" date="2008" name="Genome Res.">
        <title>Chlamydia trachomatis: genome sequence analysis of lymphogranuloma venereum isolates.</title>
        <authorList>
            <person name="Thomson N.R."/>
            <person name="Holden M.T.G."/>
            <person name="Carder C."/>
            <person name="Lennard N."/>
            <person name="Lockey S.J."/>
            <person name="Marsh P."/>
            <person name="Skipp P."/>
            <person name="O'Connor C.D."/>
            <person name="Goodhead I."/>
            <person name="Norbertzcak H."/>
            <person name="Harris B."/>
            <person name="Ormond D."/>
            <person name="Rance R."/>
            <person name="Quail M.A."/>
            <person name="Parkhill J."/>
            <person name="Stephens R.S."/>
            <person name="Clarke I.N."/>
        </authorList>
    </citation>
    <scope>NUCLEOTIDE SEQUENCE [LARGE SCALE GENOMIC DNA]</scope>
    <source>
        <strain>ATCC VR-902B / DSM 19102 / 434/Bu</strain>
    </source>
</reference>
<accession>B0B8J2</accession>
<name>RS20_CHLT2</name>
<evidence type="ECO:0000255" key="1">
    <source>
        <dbReference type="HAMAP-Rule" id="MF_00500"/>
    </source>
</evidence>
<evidence type="ECO:0000256" key="2">
    <source>
        <dbReference type="SAM" id="MobiDB-lite"/>
    </source>
</evidence>
<evidence type="ECO:0000305" key="3"/>
<keyword id="KW-0687">Ribonucleoprotein</keyword>
<keyword id="KW-0689">Ribosomal protein</keyword>
<keyword id="KW-0694">RNA-binding</keyword>
<keyword id="KW-0699">rRNA-binding</keyword>
<organism>
    <name type="scientific">Chlamydia trachomatis serovar L2 (strain ATCC VR-902B / DSM 19102 / 434/Bu)</name>
    <dbReference type="NCBI Taxonomy" id="471472"/>
    <lineage>
        <taxon>Bacteria</taxon>
        <taxon>Pseudomonadati</taxon>
        <taxon>Chlamydiota</taxon>
        <taxon>Chlamydiia</taxon>
        <taxon>Chlamydiales</taxon>
        <taxon>Chlamydiaceae</taxon>
        <taxon>Chlamydia/Chlamydophila group</taxon>
        <taxon>Chlamydia</taxon>
    </lineage>
</organism>
<feature type="chain" id="PRO_1000126419" description="Small ribosomal subunit protein bS20">
    <location>
        <begin position="1"/>
        <end position="98"/>
    </location>
</feature>
<feature type="region of interest" description="Disordered" evidence="2">
    <location>
        <begin position="1"/>
        <end position="31"/>
    </location>
</feature>
<feature type="compositionally biased region" description="Basic residues" evidence="2">
    <location>
        <begin position="1"/>
        <end position="12"/>
    </location>
</feature>
<comment type="function">
    <text evidence="1">Binds directly to 16S ribosomal RNA.</text>
</comment>
<comment type="similarity">
    <text evidence="1">Belongs to the bacterial ribosomal protein bS20 family.</text>
</comment>
<gene>
    <name evidence="1" type="primary">rpsT</name>
    <name type="ordered locus">CTL0881</name>
</gene>
<sequence length="98" mass="10826">MAPRKPSKKVGPQKRPSAEKRVITSKKKQLRNQSFKSKVRTILKKFELAVQSGDVESISAGLRSVYSIADKAVKRGIFKKGKADRVKSRASERACPAA</sequence>
<proteinExistence type="inferred from homology"/>